<protein>
    <recommendedName>
        <fullName>Cytochrome c2</fullName>
        <shortName>Cyt c2</shortName>
    </recommendedName>
</protein>
<keyword id="KW-0002">3D-structure</keyword>
<keyword id="KW-0249">Electron transport</keyword>
<keyword id="KW-0349">Heme</keyword>
<keyword id="KW-0408">Iron</keyword>
<keyword id="KW-0479">Metal-binding</keyword>
<keyword id="KW-0574">Periplasm</keyword>
<keyword id="KW-0602">Photosynthesis</keyword>
<keyword id="KW-0873">Pyrrolidone carboxylic acid</keyword>
<keyword id="KW-0813">Transport</keyword>
<feature type="chain" id="PRO_0000108346" description="Cytochrome c2">
    <location>
        <begin position="1"/>
        <end position="124"/>
    </location>
</feature>
<feature type="binding site" description="covalent">
    <location>
        <position position="15"/>
    </location>
    <ligand>
        <name>heme c</name>
        <dbReference type="ChEBI" id="CHEBI:61717"/>
    </ligand>
</feature>
<feature type="binding site" description="covalent">
    <location>
        <position position="18"/>
    </location>
    <ligand>
        <name>heme c</name>
        <dbReference type="ChEBI" id="CHEBI:61717"/>
    </ligand>
</feature>
<feature type="binding site" description="axial binding residue">
    <location>
        <position position="19"/>
    </location>
    <ligand>
        <name>heme c</name>
        <dbReference type="ChEBI" id="CHEBI:61717"/>
    </ligand>
    <ligandPart>
        <name>Fe</name>
        <dbReference type="ChEBI" id="CHEBI:18248"/>
    </ligandPart>
</feature>
<feature type="binding site" description="axial binding residue">
    <location>
        <position position="100"/>
    </location>
    <ligand>
        <name>heme c</name>
        <dbReference type="ChEBI" id="CHEBI:61717"/>
    </ligand>
    <ligandPart>
        <name>Fe</name>
        <dbReference type="ChEBI" id="CHEBI:18248"/>
    </ligandPart>
</feature>
<feature type="modified residue" description="Pyrrolidone carboxylic acid" evidence="1">
    <location>
        <position position="1"/>
    </location>
</feature>
<feature type="helix" evidence="3">
    <location>
        <begin position="5"/>
        <end position="11"/>
    </location>
</feature>
<feature type="helix" evidence="3">
    <location>
        <begin position="12"/>
        <end position="17"/>
    </location>
</feature>
<feature type="strand" evidence="4">
    <location>
        <begin position="20"/>
        <end position="22"/>
    </location>
</feature>
<feature type="strand" evidence="3">
    <location>
        <begin position="28"/>
        <end position="30"/>
    </location>
</feature>
<feature type="helix" evidence="3">
    <location>
        <begin position="59"/>
        <end position="66"/>
    </location>
</feature>
<feature type="helix" evidence="3">
    <location>
        <begin position="73"/>
        <end position="81"/>
    </location>
</feature>
<feature type="helix" evidence="3">
    <location>
        <begin position="83"/>
        <end position="91"/>
    </location>
</feature>
<feature type="helix" evidence="3">
    <location>
        <begin position="107"/>
        <end position="120"/>
    </location>
</feature>
<gene>
    <name type="primary">cycA</name>
</gene>
<reference key="1">
    <citation type="journal article" date="1994" name="Acta Crystallogr. D">
        <title>Crystallization and X-ray structure determination of cytochrome-c(2) from Rhodobacter-sphaeroides in 3 crystal forms.</title>
        <authorList>
            <person name="Axelrod H.L."/>
            <person name="Feher G."/>
            <person name="Allen J.P."/>
            <person name="Chirino A.J."/>
            <person name="Day M.W."/>
            <person name="Hsu B.T."/>
            <person name="Rees D.C."/>
        </authorList>
    </citation>
    <scope>X-RAY CRYSTALLOGRAPHY (1.95 ANGSTROMS)</scope>
</reference>
<reference key="2">
    <citation type="journal article" date="1996" name="Biochemistry">
        <title>Co-crystallization and characterization of the photosynthetic reaction center-cytochrome c2 complex from Rhodobacter sphaeroides.</title>
        <authorList>
            <person name="Adir N."/>
            <person name="Axelrod H.L."/>
            <person name="Beroza P."/>
            <person name="Isaacson R.A."/>
            <person name="Rongey S.H."/>
            <person name="Okamura M.Y."/>
            <person name="Feher G."/>
        </authorList>
    </citation>
    <scope>X-RAY CRYSTALLOGRAPHY (2.2 ANGSTROMS)</scope>
</reference>
<reference key="3">
    <citation type="journal article" date="1996" name="J. Biochem.">
        <title>Sequential 1H and 15N NMR resonance assignment and secondary structure of ferrocytochrome c2 from Rhodobacter sphaeroides.</title>
        <authorList>
            <person name="Gans P."/>
            <person name="Simorre J.-P."/>
            <person name="Caffrey M."/>
            <person name="Marion D."/>
            <person name="Richaud P."/>
            <person name="Vermeglio A."/>
        </authorList>
    </citation>
    <scope>STRUCTURE BY NMR</scope>
    <scope>PYROGLUTAMATE FORMATION AT GLN-1</scope>
    <scope>MASS SPECTROMETRY</scope>
</reference>
<accession>P0C0X8</accession>
<accession>P00095</accession>
<evidence type="ECO:0000269" key="1">
    <source>
    </source>
</evidence>
<evidence type="ECO:0000305" key="2"/>
<evidence type="ECO:0007829" key="3">
    <source>
        <dbReference type="PDB" id="1CXC"/>
    </source>
</evidence>
<evidence type="ECO:0007829" key="4">
    <source>
        <dbReference type="PDB" id="1L9B"/>
    </source>
</evidence>
<sequence length="124" mass="13469">QEGDPEAGAKAFNQCQTCHVIVDDSGTTIAGRNAKTGPNLYGVVGRTAGTQADFKGYGEGMKEAGAKGLAWDEEHFVQYVQDPTKFLKEYTGDAKAKGKMTFKLKKEADAHNIWAYLQQVAVRP</sequence>
<proteinExistence type="evidence at protein level"/>
<comment type="function">
    <text>Cytochrome c2 is found mainly in purple, non-sulfur, photosynthetic bacteria where it functions as the electron donor to the oxidized bacteriochlorophyll in the photophosphorylation pathway. However, it may also have a role in the respiratory chain and is found in some non-photosynthetic bacteria.</text>
</comment>
<comment type="subcellular location">
    <subcellularLocation>
        <location>Periplasm</location>
    </subcellularLocation>
</comment>
<comment type="PTM">
    <text>Binds 1 heme c group covalently per subunit.</text>
</comment>
<comment type="mass spectrometry" mass="14069.0" error="2.1" method="Electrospray" evidence="1"/>
<comment type="similarity">
    <text evidence="2">Belongs to the cytochrome c family.</text>
</comment>
<comment type="caution">
    <text evidence="2">The sequence shown here has been extracted from PDB entry 1CXA.</text>
</comment>
<organism>
    <name type="scientific">Cereibacter sphaeroides</name>
    <name type="common">Rhodobacter sphaeroides</name>
    <dbReference type="NCBI Taxonomy" id="1063"/>
    <lineage>
        <taxon>Bacteria</taxon>
        <taxon>Pseudomonadati</taxon>
        <taxon>Pseudomonadota</taxon>
        <taxon>Alphaproteobacteria</taxon>
        <taxon>Rhodobacterales</taxon>
        <taxon>Paracoccaceae</taxon>
        <taxon>Cereibacter</taxon>
    </lineage>
</organism>
<dbReference type="PIR" id="A38896">
    <property type="entry name" value="CCRF2S"/>
</dbReference>
<dbReference type="PDB" id="1CXA">
    <property type="method" value="X-ray"/>
    <property type="resolution" value="2.20 A"/>
    <property type="chains" value="A=1-124"/>
</dbReference>
<dbReference type="PDB" id="1CXC">
    <property type="method" value="X-ray"/>
    <property type="resolution" value="1.60 A"/>
    <property type="chains" value="A=1-124"/>
</dbReference>
<dbReference type="PDB" id="1L9B">
    <property type="method" value="X-ray"/>
    <property type="resolution" value="2.40 A"/>
    <property type="chains" value="C=1-124"/>
</dbReference>
<dbReference type="PDB" id="1L9J">
    <property type="method" value="X-ray"/>
    <property type="resolution" value="3.25 A"/>
    <property type="chains" value="C/D=1-124"/>
</dbReference>
<dbReference type="PDB" id="2CXB">
    <property type="method" value="X-ray"/>
    <property type="resolution" value="1.95 A"/>
    <property type="chains" value="A/B=1-124"/>
</dbReference>
<dbReference type="PDBsum" id="1CXA"/>
<dbReference type="PDBsum" id="1CXC"/>
<dbReference type="PDBsum" id="1L9B"/>
<dbReference type="PDBsum" id="1L9J"/>
<dbReference type="PDBsum" id="2CXB"/>
<dbReference type="SMR" id="P0C0X8"/>
<dbReference type="DrugBank" id="DB04147">
    <property type="generic name" value="Dodecyldimethylamine N-oxide"/>
</dbReference>
<dbReference type="EvolutionaryTrace" id="P0C0X8"/>
<dbReference type="GO" id="GO:0042597">
    <property type="term" value="C:periplasmic space"/>
    <property type="evidence" value="ECO:0007669"/>
    <property type="project" value="UniProtKB-SubCell"/>
</dbReference>
<dbReference type="GO" id="GO:0009055">
    <property type="term" value="F:electron transfer activity"/>
    <property type="evidence" value="ECO:0007669"/>
    <property type="project" value="InterPro"/>
</dbReference>
<dbReference type="GO" id="GO:0020037">
    <property type="term" value="F:heme binding"/>
    <property type="evidence" value="ECO:0007669"/>
    <property type="project" value="InterPro"/>
</dbReference>
<dbReference type="GO" id="GO:0046872">
    <property type="term" value="F:metal ion binding"/>
    <property type="evidence" value="ECO:0007669"/>
    <property type="project" value="UniProtKB-KW"/>
</dbReference>
<dbReference type="GO" id="GO:0015979">
    <property type="term" value="P:photosynthesis"/>
    <property type="evidence" value="ECO:0007669"/>
    <property type="project" value="UniProtKB-KW"/>
</dbReference>
<dbReference type="Gene3D" id="1.10.760.10">
    <property type="entry name" value="Cytochrome c-like domain"/>
    <property type="match status" value="1"/>
</dbReference>
<dbReference type="InterPro" id="IPR009056">
    <property type="entry name" value="Cyt_c-like_dom"/>
</dbReference>
<dbReference type="InterPro" id="IPR036909">
    <property type="entry name" value="Cyt_c-like_dom_sf"/>
</dbReference>
<dbReference type="InterPro" id="IPR002327">
    <property type="entry name" value="Cyt_c_1A/1B"/>
</dbReference>
<dbReference type="PANTHER" id="PTHR11961">
    <property type="entry name" value="CYTOCHROME C"/>
    <property type="match status" value="1"/>
</dbReference>
<dbReference type="SUPFAM" id="SSF46626">
    <property type="entry name" value="Cytochrome c"/>
    <property type="match status" value="1"/>
</dbReference>
<dbReference type="PROSITE" id="PS51007">
    <property type="entry name" value="CYTC"/>
    <property type="match status" value="1"/>
</dbReference>
<name>CYC2_CERSP</name>